<gene>
    <name evidence="1" type="primary">aroC</name>
    <name type="ordered locus">CHU_0369</name>
</gene>
<proteinExistence type="inferred from homology"/>
<dbReference type="EC" id="4.2.3.5" evidence="1"/>
<dbReference type="EMBL" id="CP000383">
    <property type="protein sequence ID" value="ABG57659.1"/>
    <property type="molecule type" value="Genomic_DNA"/>
</dbReference>
<dbReference type="RefSeq" id="WP_011583775.1">
    <property type="nucleotide sequence ID" value="NC_008255.1"/>
</dbReference>
<dbReference type="SMR" id="Q11Y57"/>
<dbReference type="STRING" id="269798.CHU_0369"/>
<dbReference type="KEGG" id="chu:CHU_0369"/>
<dbReference type="eggNOG" id="COG0082">
    <property type="taxonomic scope" value="Bacteria"/>
</dbReference>
<dbReference type="HOGENOM" id="CLU_034547_0_1_10"/>
<dbReference type="OrthoDB" id="9771806at2"/>
<dbReference type="UniPathway" id="UPA00053">
    <property type="reaction ID" value="UER00090"/>
</dbReference>
<dbReference type="Proteomes" id="UP000001822">
    <property type="component" value="Chromosome"/>
</dbReference>
<dbReference type="GO" id="GO:0005829">
    <property type="term" value="C:cytosol"/>
    <property type="evidence" value="ECO:0007669"/>
    <property type="project" value="TreeGrafter"/>
</dbReference>
<dbReference type="GO" id="GO:0004107">
    <property type="term" value="F:chorismate synthase activity"/>
    <property type="evidence" value="ECO:0007669"/>
    <property type="project" value="UniProtKB-UniRule"/>
</dbReference>
<dbReference type="GO" id="GO:0010181">
    <property type="term" value="F:FMN binding"/>
    <property type="evidence" value="ECO:0007669"/>
    <property type="project" value="TreeGrafter"/>
</dbReference>
<dbReference type="GO" id="GO:0008652">
    <property type="term" value="P:amino acid biosynthetic process"/>
    <property type="evidence" value="ECO:0007669"/>
    <property type="project" value="UniProtKB-KW"/>
</dbReference>
<dbReference type="GO" id="GO:0009073">
    <property type="term" value="P:aromatic amino acid family biosynthetic process"/>
    <property type="evidence" value="ECO:0007669"/>
    <property type="project" value="UniProtKB-KW"/>
</dbReference>
<dbReference type="GO" id="GO:0009423">
    <property type="term" value="P:chorismate biosynthetic process"/>
    <property type="evidence" value="ECO:0007669"/>
    <property type="project" value="UniProtKB-UniRule"/>
</dbReference>
<dbReference type="CDD" id="cd07304">
    <property type="entry name" value="Chorismate_synthase"/>
    <property type="match status" value="1"/>
</dbReference>
<dbReference type="FunFam" id="3.60.150.10:FF:000003">
    <property type="entry name" value="Chorismate synthase"/>
    <property type="match status" value="1"/>
</dbReference>
<dbReference type="Gene3D" id="3.60.150.10">
    <property type="entry name" value="Chorismate synthase AroC"/>
    <property type="match status" value="1"/>
</dbReference>
<dbReference type="HAMAP" id="MF_00300">
    <property type="entry name" value="Chorismate_synth"/>
    <property type="match status" value="1"/>
</dbReference>
<dbReference type="InterPro" id="IPR000453">
    <property type="entry name" value="Chorismate_synth"/>
</dbReference>
<dbReference type="InterPro" id="IPR035904">
    <property type="entry name" value="Chorismate_synth_AroC_sf"/>
</dbReference>
<dbReference type="InterPro" id="IPR020541">
    <property type="entry name" value="Chorismate_synthase_CS"/>
</dbReference>
<dbReference type="NCBIfam" id="TIGR00033">
    <property type="entry name" value="aroC"/>
    <property type="match status" value="1"/>
</dbReference>
<dbReference type="NCBIfam" id="NF003793">
    <property type="entry name" value="PRK05382.1"/>
    <property type="match status" value="1"/>
</dbReference>
<dbReference type="PANTHER" id="PTHR21085">
    <property type="entry name" value="CHORISMATE SYNTHASE"/>
    <property type="match status" value="1"/>
</dbReference>
<dbReference type="PANTHER" id="PTHR21085:SF0">
    <property type="entry name" value="CHORISMATE SYNTHASE"/>
    <property type="match status" value="1"/>
</dbReference>
<dbReference type="Pfam" id="PF01264">
    <property type="entry name" value="Chorismate_synt"/>
    <property type="match status" value="1"/>
</dbReference>
<dbReference type="PIRSF" id="PIRSF001456">
    <property type="entry name" value="Chorismate_synth"/>
    <property type="match status" value="1"/>
</dbReference>
<dbReference type="SUPFAM" id="SSF103263">
    <property type="entry name" value="Chorismate synthase, AroC"/>
    <property type="match status" value="1"/>
</dbReference>
<dbReference type="PROSITE" id="PS00787">
    <property type="entry name" value="CHORISMATE_SYNTHASE_1"/>
    <property type="match status" value="1"/>
</dbReference>
<dbReference type="PROSITE" id="PS00788">
    <property type="entry name" value="CHORISMATE_SYNTHASE_2"/>
    <property type="match status" value="1"/>
</dbReference>
<dbReference type="PROSITE" id="PS00789">
    <property type="entry name" value="CHORISMATE_SYNTHASE_3"/>
    <property type="match status" value="1"/>
</dbReference>
<name>AROC_CYTH3</name>
<accession>Q11Y57</accession>
<comment type="function">
    <text evidence="1">Catalyzes the anti-1,4-elimination of the C-3 phosphate and the C-6 proR hydrogen from 5-enolpyruvylshikimate-3-phosphate (EPSP) to yield chorismate, which is the branch point compound that serves as the starting substrate for the three terminal pathways of aromatic amino acid biosynthesis. This reaction introduces a second double bond into the aromatic ring system.</text>
</comment>
<comment type="catalytic activity">
    <reaction evidence="1">
        <text>5-O-(1-carboxyvinyl)-3-phosphoshikimate = chorismate + phosphate</text>
        <dbReference type="Rhea" id="RHEA:21020"/>
        <dbReference type="ChEBI" id="CHEBI:29748"/>
        <dbReference type="ChEBI" id="CHEBI:43474"/>
        <dbReference type="ChEBI" id="CHEBI:57701"/>
        <dbReference type="EC" id="4.2.3.5"/>
    </reaction>
</comment>
<comment type="cofactor">
    <cofactor evidence="1">
        <name>FMNH2</name>
        <dbReference type="ChEBI" id="CHEBI:57618"/>
    </cofactor>
    <text evidence="1">Reduced FMN (FMNH(2)).</text>
</comment>
<comment type="pathway">
    <text evidence="1">Metabolic intermediate biosynthesis; chorismate biosynthesis; chorismate from D-erythrose 4-phosphate and phosphoenolpyruvate: step 7/7.</text>
</comment>
<comment type="subunit">
    <text evidence="1">Homotetramer.</text>
</comment>
<comment type="similarity">
    <text evidence="1">Belongs to the chorismate synthase family.</text>
</comment>
<protein>
    <recommendedName>
        <fullName evidence="1">Chorismate synthase</fullName>
        <shortName evidence="1">CS</shortName>
        <ecNumber evidence="1">4.2.3.5</ecNumber>
    </recommendedName>
    <alternativeName>
        <fullName evidence="1">5-enolpyruvylshikimate-3-phosphate phospholyase</fullName>
    </alternativeName>
</protein>
<organism>
    <name type="scientific">Cytophaga hutchinsonii (strain ATCC 33406 / DSM 1761 / CIP 103989 / NBRC 15051 / NCIMB 9469 / D465)</name>
    <dbReference type="NCBI Taxonomy" id="269798"/>
    <lineage>
        <taxon>Bacteria</taxon>
        <taxon>Pseudomonadati</taxon>
        <taxon>Bacteroidota</taxon>
        <taxon>Cytophagia</taxon>
        <taxon>Cytophagales</taxon>
        <taxon>Cytophagaceae</taxon>
        <taxon>Cytophaga</taxon>
    </lineage>
</organism>
<keyword id="KW-0028">Amino-acid biosynthesis</keyword>
<keyword id="KW-0057">Aromatic amino acid biosynthesis</keyword>
<keyword id="KW-0274">FAD</keyword>
<keyword id="KW-0285">Flavoprotein</keyword>
<keyword id="KW-0288">FMN</keyword>
<keyword id="KW-0456">Lyase</keyword>
<keyword id="KW-0521">NADP</keyword>
<keyword id="KW-1185">Reference proteome</keyword>
<feature type="chain" id="PRO_0000256288" description="Chorismate synthase">
    <location>
        <begin position="1"/>
        <end position="360"/>
    </location>
</feature>
<feature type="binding site" evidence="1">
    <location>
        <position position="47"/>
    </location>
    <ligand>
        <name>NADP(+)</name>
        <dbReference type="ChEBI" id="CHEBI:58349"/>
    </ligand>
</feature>
<feature type="binding site" evidence="1">
    <location>
        <begin position="124"/>
        <end position="126"/>
    </location>
    <ligand>
        <name>FMN</name>
        <dbReference type="ChEBI" id="CHEBI:58210"/>
    </ligand>
</feature>
<feature type="binding site" evidence="1">
    <location>
        <begin position="240"/>
        <end position="241"/>
    </location>
    <ligand>
        <name>FMN</name>
        <dbReference type="ChEBI" id="CHEBI:58210"/>
    </ligand>
</feature>
<feature type="binding site" evidence="1">
    <location>
        <position position="285"/>
    </location>
    <ligand>
        <name>FMN</name>
        <dbReference type="ChEBI" id="CHEBI:58210"/>
    </ligand>
</feature>
<feature type="binding site" evidence="1">
    <location>
        <begin position="300"/>
        <end position="304"/>
    </location>
    <ligand>
        <name>FMN</name>
        <dbReference type="ChEBI" id="CHEBI:58210"/>
    </ligand>
</feature>
<feature type="binding site" evidence="1">
    <location>
        <position position="326"/>
    </location>
    <ligand>
        <name>FMN</name>
        <dbReference type="ChEBI" id="CHEBI:58210"/>
    </ligand>
</feature>
<reference key="1">
    <citation type="journal article" date="2007" name="Appl. Environ. Microbiol.">
        <title>Genome sequence of the cellulolytic gliding bacterium Cytophaga hutchinsonii.</title>
        <authorList>
            <person name="Xie G."/>
            <person name="Bruce D.C."/>
            <person name="Challacombe J.F."/>
            <person name="Chertkov O."/>
            <person name="Detter J.C."/>
            <person name="Gilna P."/>
            <person name="Han C.S."/>
            <person name="Lucas S."/>
            <person name="Misra M."/>
            <person name="Myers G.L."/>
            <person name="Richardson P."/>
            <person name="Tapia R."/>
            <person name="Thayer N."/>
            <person name="Thompson L.S."/>
            <person name="Brettin T.S."/>
            <person name="Henrissat B."/>
            <person name="Wilson D.B."/>
            <person name="McBride M.J."/>
        </authorList>
    </citation>
    <scope>NUCLEOTIDE SEQUENCE [LARGE SCALE GENOMIC DNA]</scope>
    <source>
        <strain>ATCC 33406 / DSM 1761 / JCM 20678 / CIP 103989 / IAM 12607 / NBRC 15051 / NCIMB 9469 / D465</strain>
    </source>
</reference>
<sequence length="360" mass="39358">MSNTYGTIFRITTFGESHGNAVGVIVDGCPPNIEIDEAFIQSEMARRKPGQSKIVTQRQEDDEIEILSGVFEGKSTGTPIAMMVRNADQRSKDYSHIADRFRPSHADYTYQEKYGFRDYRGGGRSSARETLARVAAGALAKMILAKVNIKIQAYVSQVGPLKLTTDYKALNIPNAETNIIRCPDDAVAAKMIEFIDETRKNKDTIGGVVSCVIEGVPVGLGEPVFDKLHAELGKAMLSINAVKGFEYGSGFEGVEQFGSQHNDKFYADEQGNVRTQTNNSGGIQGGISNGEDIYFRVAFKPVATIMIDQESINDKGETVTVSGKGRHDPCVVPRAVPIVEAMAAIVMVDFYLRNKAIRLD</sequence>
<evidence type="ECO:0000255" key="1">
    <source>
        <dbReference type="HAMAP-Rule" id="MF_00300"/>
    </source>
</evidence>